<comment type="function">
    <text evidence="1">The phosphoenolpyruvate-dependent sugar phosphotransferase system (sugar PTS), a major carbohydrate active transport system, catalyzes the phosphorylation of incoming sugar substrates concomitantly with their translocation across the cell membrane. The enzyme II LacEF PTS system is involved in lactose transport.</text>
</comment>
<comment type="cofactor">
    <cofactor evidence="2">
        <name>Mg(2+)</name>
        <dbReference type="ChEBI" id="CHEBI:18420"/>
    </cofactor>
    <text evidence="2">Binds 1 Mg(2+) ion per trimer.</text>
</comment>
<comment type="subunit">
    <text evidence="1">Homotrimer.</text>
</comment>
<comment type="subcellular location">
    <subcellularLocation>
        <location evidence="4">Cytoplasm</location>
    </subcellularLocation>
</comment>
<comment type="induction">
    <text evidence="1">Induced by lactose, galactose and galactose-6-P. Repressed by glucose.</text>
</comment>
<comment type="domain">
    <text evidence="3">The PTS EIIA type-3 domain is phosphorylated by phospho-HPr on a histidyl residue. Then, it transfers the phosphoryl group to the PTS EIIB type-3 domain.</text>
</comment>
<proteinExistence type="inferred from homology"/>
<accession>Q6GEN8</accession>
<sequence length="103" mass="11370">MNREEVQLLGFEIVAFAGDARSKFLEALTAAQAGDFAKADALIEEGNNCIAEAHRAQTSLLAKEAQGDDIAYSVTMMHGQDHLMTTILLKDLMKHLLEFYKRG</sequence>
<evidence type="ECO:0000250" key="1">
    <source>
        <dbReference type="UniProtKB" id="P0A0D6"/>
    </source>
</evidence>
<evidence type="ECO:0000250" key="2">
    <source>
        <dbReference type="UniProtKB" id="P23532"/>
    </source>
</evidence>
<evidence type="ECO:0000255" key="3">
    <source>
        <dbReference type="PROSITE-ProRule" id="PRU00418"/>
    </source>
</evidence>
<evidence type="ECO:0000305" key="4"/>
<dbReference type="EMBL" id="BX571856">
    <property type="protein sequence ID" value="CAG41260.1"/>
    <property type="molecule type" value="Genomic_DNA"/>
</dbReference>
<dbReference type="RefSeq" id="WP_001078309.1">
    <property type="nucleotide sequence ID" value="NC_002952.2"/>
</dbReference>
<dbReference type="SMR" id="Q6GEN8"/>
<dbReference type="KEGG" id="sar:SAR2282"/>
<dbReference type="HOGENOM" id="CLU_152490_1_0_9"/>
<dbReference type="Proteomes" id="UP000000596">
    <property type="component" value="Chromosome"/>
</dbReference>
<dbReference type="GO" id="GO:0005737">
    <property type="term" value="C:cytoplasm"/>
    <property type="evidence" value="ECO:0007669"/>
    <property type="project" value="UniProtKB-SubCell"/>
</dbReference>
<dbReference type="GO" id="GO:0046872">
    <property type="term" value="F:metal ion binding"/>
    <property type="evidence" value="ECO:0007669"/>
    <property type="project" value="UniProtKB-KW"/>
</dbReference>
<dbReference type="GO" id="GO:0016740">
    <property type="term" value="F:transferase activity"/>
    <property type="evidence" value="ECO:0007669"/>
    <property type="project" value="UniProtKB-KW"/>
</dbReference>
<dbReference type="GO" id="GO:0009401">
    <property type="term" value="P:phosphoenolpyruvate-dependent sugar phosphotransferase system"/>
    <property type="evidence" value="ECO:0007669"/>
    <property type="project" value="UniProtKB-KW"/>
</dbReference>
<dbReference type="CDD" id="cd00215">
    <property type="entry name" value="PTS_IIA_lac"/>
    <property type="match status" value="1"/>
</dbReference>
<dbReference type="Gene3D" id="1.20.58.80">
    <property type="entry name" value="Phosphotransferase system, lactose/cellobiose-type IIA subunit"/>
    <property type="match status" value="1"/>
</dbReference>
<dbReference type="InterPro" id="IPR003188">
    <property type="entry name" value="PTS_IIA_lac/cel"/>
</dbReference>
<dbReference type="InterPro" id="IPR036542">
    <property type="entry name" value="PTS_IIA_lac/cel_sf"/>
</dbReference>
<dbReference type="NCBIfam" id="TIGR00823">
    <property type="entry name" value="EIIA-LAC"/>
    <property type="match status" value="1"/>
</dbReference>
<dbReference type="PANTHER" id="PTHR34382:SF9">
    <property type="entry name" value="PHOSPHOTRANSFERASE SYSTEM SUGAR-SPECIFIC EII COMPONENT"/>
    <property type="match status" value="1"/>
</dbReference>
<dbReference type="PANTHER" id="PTHR34382">
    <property type="entry name" value="PTS SYSTEM N,N'-DIACETYLCHITOBIOSE-SPECIFIC EIIA COMPONENT"/>
    <property type="match status" value="1"/>
</dbReference>
<dbReference type="Pfam" id="PF02255">
    <property type="entry name" value="PTS_IIA"/>
    <property type="match status" value="1"/>
</dbReference>
<dbReference type="PIRSF" id="PIRSF000699">
    <property type="entry name" value="PTS_IILac_III"/>
    <property type="match status" value="1"/>
</dbReference>
<dbReference type="SUPFAM" id="SSF46973">
    <property type="entry name" value="Enzyme IIa from lactose specific PTS, IIa-lac"/>
    <property type="match status" value="1"/>
</dbReference>
<dbReference type="PROSITE" id="PS51095">
    <property type="entry name" value="PTS_EIIA_TYPE_3"/>
    <property type="match status" value="1"/>
</dbReference>
<protein>
    <recommendedName>
        <fullName evidence="1">PTS system lactose-specific EIIA component</fullName>
    </recommendedName>
    <alternativeName>
        <fullName evidence="1">EIIA-Lac</fullName>
    </alternativeName>
    <alternativeName>
        <fullName evidence="1">EIII-Lac</fullName>
    </alternativeName>
    <alternativeName>
        <fullName evidence="1">Lactose-specific phosphotransferase enzyme IIA component</fullName>
    </alternativeName>
</protein>
<feature type="chain" id="PRO_0000186601" description="PTS system lactose-specific EIIA component">
    <location>
        <begin position="1"/>
        <end position="103"/>
    </location>
</feature>
<feature type="domain" description="PTS EIIA type-3" evidence="3">
    <location>
        <begin position="1"/>
        <end position="102"/>
    </location>
</feature>
<feature type="active site" description="Tele-phosphohistidine intermediate" evidence="1">
    <location>
        <position position="78"/>
    </location>
</feature>
<feature type="binding site" evidence="2">
    <location>
        <position position="81"/>
    </location>
    <ligand>
        <name>Mg(2+)</name>
        <dbReference type="ChEBI" id="CHEBI:18420"/>
        <note>ligand shared between all trimeric partners</note>
    </ligand>
</feature>
<feature type="modified residue" description="Phosphohistidine; by HPr" evidence="1 3">
    <location>
        <position position="78"/>
    </location>
</feature>
<reference key="1">
    <citation type="journal article" date="2004" name="Proc. Natl. Acad. Sci. U.S.A.">
        <title>Complete genomes of two clinical Staphylococcus aureus strains: evidence for the rapid evolution of virulence and drug resistance.</title>
        <authorList>
            <person name="Holden M.T.G."/>
            <person name="Feil E.J."/>
            <person name="Lindsay J.A."/>
            <person name="Peacock S.J."/>
            <person name="Day N.P.J."/>
            <person name="Enright M.C."/>
            <person name="Foster T.J."/>
            <person name="Moore C.E."/>
            <person name="Hurst L."/>
            <person name="Atkin R."/>
            <person name="Barron A."/>
            <person name="Bason N."/>
            <person name="Bentley S.D."/>
            <person name="Chillingworth C."/>
            <person name="Chillingworth T."/>
            <person name="Churcher C."/>
            <person name="Clark L."/>
            <person name="Corton C."/>
            <person name="Cronin A."/>
            <person name="Doggett J."/>
            <person name="Dowd L."/>
            <person name="Feltwell T."/>
            <person name="Hance Z."/>
            <person name="Harris B."/>
            <person name="Hauser H."/>
            <person name="Holroyd S."/>
            <person name="Jagels K."/>
            <person name="James K.D."/>
            <person name="Lennard N."/>
            <person name="Line A."/>
            <person name="Mayes R."/>
            <person name="Moule S."/>
            <person name="Mungall K."/>
            <person name="Ormond D."/>
            <person name="Quail M.A."/>
            <person name="Rabbinowitsch E."/>
            <person name="Rutherford K.M."/>
            <person name="Sanders M."/>
            <person name="Sharp S."/>
            <person name="Simmonds M."/>
            <person name="Stevens K."/>
            <person name="Whitehead S."/>
            <person name="Barrell B.G."/>
            <person name="Spratt B.G."/>
            <person name="Parkhill J."/>
        </authorList>
    </citation>
    <scope>NUCLEOTIDE SEQUENCE [LARGE SCALE GENOMIC DNA]</scope>
    <source>
        <strain>MRSA252</strain>
    </source>
</reference>
<organism>
    <name type="scientific">Staphylococcus aureus (strain MRSA252)</name>
    <dbReference type="NCBI Taxonomy" id="282458"/>
    <lineage>
        <taxon>Bacteria</taxon>
        <taxon>Bacillati</taxon>
        <taxon>Bacillota</taxon>
        <taxon>Bacilli</taxon>
        <taxon>Bacillales</taxon>
        <taxon>Staphylococcaceae</taxon>
        <taxon>Staphylococcus</taxon>
    </lineage>
</organism>
<name>PTLA_STAAR</name>
<gene>
    <name evidence="1" type="primary">lacF</name>
    <name type="ordered locus">SAR2282</name>
</gene>
<keyword id="KW-0963">Cytoplasm</keyword>
<keyword id="KW-0460">Magnesium</keyword>
<keyword id="KW-0479">Metal-binding</keyword>
<keyword id="KW-0597">Phosphoprotein</keyword>
<keyword id="KW-0598">Phosphotransferase system</keyword>
<keyword id="KW-0762">Sugar transport</keyword>
<keyword id="KW-0808">Transferase</keyword>
<keyword id="KW-0813">Transport</keyword>